<accession>C3MX03</accession>
<sequence length="230" mass="26768">MKVLAIKLVDYREWTERLGYDREWLIQKIQNKFMMKIHEIASQYSTFPLQLRFDNFLMIVDGITNTQLIYMINDMQENLPVGIKTCLGYGKTPLEAQWNASVCLNNKEDKFKEYVDEKIAALHFDINFNTEALKYTSVYDSFLEITNIYVDLSRFLYKIGGILQYLGGDNYLGFVSTNSVNKVIEKFSDDNKIKVGIGIGQNARTAIKLATTSLEKIRNNREKTWHIEEE</sequence>
<gene>
    <name evidence="1" type="primary">gch3</name>
    <name type="ordered locus">M1425_1704</name>
</gene>
<dbReference type="EC" id="3.5.4.29" evidence="1"/>
<dbReference type="EMBL" id="CP001400">
    <property type="protein sequence ID" value="ACP38453.1"/>
    <property type="molecule type" value="Genomic_DNA"/>
</dbReference>
<dbReference type="RefSeq" id="WP_012711684.1">
    <property type="nucleotide sequence ID" value="NC_012588.1"/>
</dbReference>
<dbReference type="SMR" id="C3MX03"/>
<dbReference type="KEGG" id="sia:M1425_1704"/>
<dbReference type="HOGENOM" id="CLU_080076_0_0_2"/>
<dbReference type="Proteomes" id="UP000001350">
    <property type="component" value="Chromosome"/>
</dbReference>
<dbReference type="GO" id="GO:0005525">
    <property type="term" value="F:GTP binding"/>
    <property type="evidence" value="ECO:0007669"/>
    <property type="project" value="UniProtKB-KW"/>
</dbReference>
<dbReference type="GO" id="GO:0043740">
    <property type="term" value="F:GTP cyclohydrolase IIa activity"/>
    <property type="evidence" value="ECO:0007669"/>
    <property type="project" value="UniProtKB-EC"/>
</dbReference>
<dbReference type="GO" id="GO:0009058">
    <property type="term" value="P:biosynthetic process"/>
    <property type="evidence" value="ECO:0007669"/>
    <property type="project" value="InterPro"/>
</dbReference>
<dbReference type="Gene3D" id="3.30.70.270">
    <property type="match status" value="1"/>
</dbReference>
<dbReference type="Gene3D" id="3.30.70.1230">
    <property type="entry name" value="Nucleotide cyclase"/>
    <property type="match status" value="1"/>
</dbReference>
<dbReference type="HAMAP" id="MF_00608">
    <property type="entry name" value="GTP_cyclohydro_3"/>
    <property type="match status" value="1"/>
</dbReference>
<dbReference type="InterPro" id="IPR007839">
    <property type="entry name" value="GTP_CycHdrlase_3"/>
</dbReference>
<dbReference type="InterPro" id="IPR029787">
    <property type="entry name" value="Nucleotide_cyclase"/>
</dbReference>
<dbReference type="InterPro" id="IPR043128">
    <property type="entry name" value="Rev_trsase/Diguanyl_cyclase"/>
</dbReference>
<dbReference type="PANTHER" id="PTHR42202">
    <property type="entry name" value="GTP CYCLOHYDROLASE III"/>
    <property type="match status" value="1"/>
</dbReference>
<dbReference type="PANTHER" id="PTHR42202:SF1">
    <property type="entry name" value="GTP CYCLOHYDROLASE III"/>
    <property type="match status" value="1"/>
</dbReference>
<dbReference type="Pfam" id="PF05165">
    <property type="entry name" value="GCH_III"/>
    <property type="match status" value="1"/>
</dbReference>
<dbReference type="PIRSF" id="PIRSF009265">
    <property type="entry name" value="GTP_cyclohydro_3"/>
    <property type="match status" value="1"/>
</dbReference>
<protein>
    <recommendedName>
        <fullName evidence="1">GTP cyclohydrolase III</fullName>
        <ecNumber evidence="1">3.5.4.29</ecNumber>
    </recommendedName>
</protein>
<evidence type="ECO:0000255" key="1">
    <source>
        <dbReference type="HAMAP-Rule" id="MF_00608"/>
    </source>
</evidence>
<organism>
    <name type="scientific">Saccharolobus islandicus (strain M.14.25 / Kamchatka #1)</name>
    <name type="common">Sulfolobus islandicus</name>
    <dbReference type="NCBI Taxonomy" id="427317"/>
    <lineage>
        <taxon>Archaea</taxon>
        <taxon>Thermoproteota</taxon>
        <taxon>Thermoprotei</taxon>
        <taxon>Sulfolobales</taxon>
        <taxon>Sulfolobaceae</taxon>
        <taxon>Saccharolobus</taxon>
    </lineage>
</organism>
<keyword id="KW-0342">GTP-binding</keyword>
<keyword id="KW-0378">Hydrolase</keyword>
<keyword id="KW-0547">Nucleotide-binding</keyword>
<feature type="chain" id="PRO_1000212262" description="GTP cyclohydrolase III">
    <location>
        <begin position="1"/>
        <end position="230"/>
    </location>
</feature>
<name>GCH3_SACI4</name>
<reference key="1">
    <citation type="journal article" date="2009" name="Proc. Natl. Acad. Sci. U.S.A.">
        <title>Biogeography of the Sulfolobus islandicus pan-genome.</title>
        <authorList>
            <person name="Reno M.L."/>
            <person name="Held N.L."/>
            <person name="Fields C.J."/>
            <person name="Burke P.V."/>
            <person name="Whitaker R.J."/>
        </authorList>
    </citation>
    <scope>NUCLEOTIDE SEQUENCE [LARGE SCALE GENOMIC DNA]</scope>
    <source>
        <strain>M.14.25 / Kamchatka #1</strain>
    </source>
</reference>
<proteinExistence type="inferred from homology"/>
<comment type="function">
    <text evidence="1">Catalyzes the formation of 2-amino-5-formylamino-6-ribofuranosylamino-4(3H)-pyrimidinone ribonucleotide monophosphate and inorganic phosphate from GTP. Also has an independent pyrophosphate phosphohydrolase activity.</text>
</comment>
<comment type="catalytic activity">
    <reaction evidence="1">
        <text>GTP + 3 H2O = 2-amino-5-formylamino-6-(5-phospho-D-ribosylamino)pyrimidin-4(3H)-one + 2 phosphate + 2 H(+)</text>
        <dbReference type="Rhea" id="RHEA:22468"/>
        <dbReference type="ChEBI" id="CHEBI:15377"/>
        <dbReference type="ChEBI" id="CHEBI:15378"/>
        <dbReference type="ChEBI" id="CHEBI:37565"/>
        <dbReference type="ChEBI" id="CHEBI:43474"/>
        <dbReference type="ChEBI" id="CHEBI:57258"/>
        <dbReference type="EC" id="3.5.4.29"/>
    </reaction>
</comment>
<comment type="similarity">
    <text evidence="1">Belongs to the archaeal-type GTP cyclohydrolase family.</text>
</comment>